<proteinExistence type="inferred from homology"/>
<comment type="function">
    <text evidence="1">Converts the preformed base xanthine, a product of nucleic acid breakdown, to xanthosine 5'-monophosphate (XMP), so it can be reused for RNA or DNA synthesis.</text>
</comment>
<comment type="catalytic activity">
    <reaction evidence="1">
        <text>XMP + diphosphate = xanthine + 5-phospho-alpha-D-ribose 1-diphosphate</text>
        <dbReference type="Rhea" id="RHEA:10800"/>
        <dbReference type="ChEBI" id="CHEBI:17712"/>
        <dbReference type="ChEBI" id="CHEBI:33019"/>
        <dbReference type="ChEBI" id="CHEBI:57464"/>
        <dbReference type="ChEBI" id="CHEBI:58017"/>
        <dbReference type="EC" id="2.4.2.22"/>
    </reaction>
</comment>
<comment type="pathway">
    <text evidence="1">Purine metabolism; XMP biosynthesis via salvage pathway; XMP from xanthine: step 1/1.</text>
</comment>
<comment type="subunit">
    <text evidence="1">Homodimer.</text>
</comment>
<comment type="subcellular location">
    <subcellularLocation>
        <location evidence="1">Cytoplasm</location>
    </subcellularLocation>
</comment>
<comment type="similarity">
    <text evidence="1">Belongs to the purine/pyrimidine phosphoribosyltransferase family. Xpt subfamily.</text>
</comment>
<dbReference type="EC" id="2.4.2.22" evidence="1"/>
<dbReference type="EMBL" id="CP000261">
    <property type="protein sequence ID" value="ABF35984.1"/>
    <property type="molecule type" value="Genomic_DNA"/>
</dbReference>
<dbReference type="SMR" id="Q1JBS4"/>
<dbReference type="KEGG" id="spj:MGAS2096_Spy0932"/>
<dbReference type="HOGENOM" id="CLU_099015_0_0_9"/>
<dbReference type="UniPathway" id="UPA00602">
    <property type="reaction ID" value="UER00658"/>
</dbReference>
<dbReference type="GO" id="GO:0005737">
    <property type="term" value="C:cytoplasm"/>
    <property type="evidence" value="ECO:0007669"/>
    <property type="project" value="UniProtKB-SubCell"/>
</dbReference>
<dbReference type="GO" id="GO:0000310">
    <property type="term" value="F:xanthine phosphoribosyltransferase activity"/>
    <property type="evidence" value="ECO:0007669"/>
    <property type="project" value="UniProtKB-UniRule"/>
</dbReference>
<dbReference type="GO" id="GO:0006166">
    <property type="term" value="P:purine ribonucleoside salvage"/>
    <property type="evidence" value="ECO:0007669"/>
    <property type="project" value="UniProtKB-KW"/>
</dbReference>
<dbReference type="GO" id="GO:0046110">
    <property type="term" value="P:xanthine metabolic process"/>
    <property type="evidence" value="ECO:0007669"/>
    <property type="project" value="InterPro"/>
</dbReference>
<dbReference type="GO" id="GO:0032265">
    <property type="term" value="P:XMP salvage"/>
    <property type="evidence" value="ECO:0007669"/>
    <property type="project" value="UniProtKB-UniRule"/>
</dbReference>
<dbReference type="CDD" id="cd06223">
    <property type="entry name" value="PRTases_typeI"/>
    <property type="match status" value="1"/>
</dbReference>
<dbReference type="Gene3D" id="3.40.50.2020">
    <property type="match status" value="1"/>
</dbReference>
<dbReference type="HAMAP" id="MF_01184">
    <property type="entry name" value="XPRTase"/>
    <property type="match status" value="1"/>
</dbReference>
<dbReference type="InterPro" id="IPR000836">
    <property type="entry name" value="PRibTrfase_dom"/>
</dbReference>
<dbReference type="InterPro" id="IPR029057">
    <property type="entry name" value="PRTase-like"/>
</dbReference>
<dbReference type="InterPro" id="IPR050118">
    <property type="entry name" value="Pur/Pyrimidine_PRTase"/>
</dbReference>
<dbReference type="InterPro" id="IPR010079">
    <property type="entry name" value="Xanthine_PRibTrfase"/>
</dbReference>
<dbReference type="NCBIfam" id="NF006671">
    <property type="entry name" value="PRK09219.1"/>
    <property type="match status" value="1"/>
</dbReference>
<dbReference type="NCBIfam" id="TIGR01744">
    <property type="entry name" value="XPRTase"/>
    <property type="match status" value="1"/>
</dbReference>
<dbReference type="PANTHER" id="PTHR43864">
    <property type="entry name" value="HYPOXANTHINE/GUANINE PHOSPHORIBOSYLTRANSFERASE"/>
    <property type="match status" value="1"/>
</dbReference>
<dbReference type="PANTHER" id="PTHR43864:SF1">
    <property type="entry name" value="XANTHINE PHOSPHORIBOSYLTRANSFERASE"/>
    <property type="match status" value="1"/>
</dbReference>
<dbReference type="Pfam" id="PF00156">
    <property type="entry name" value="Pribosyltran"/>
    <property type="match status" value="1"/>
</dbReference>
<dbReference type="SUPFAM" id="SSF53271">
    <property type="entry name" value="PRTase-like"/>
    <property type="match status" value="1"/>
</dbReference>
<accession>Q1JBS4</accession>
<organism>
    <name type="scientific">Streptococcus pyogenes serotype M12 (strain MGAS2096)</name>
    <dbReference type="NCBI Taxonomy" id="370553"/>
    <lineage>
        <taxon>Bacteria</taxon>
        <taxon>Bacillati</taxon>
        <taxon>Bacillota</taxon>
        <taxon>Bacilli</taxon>
        <taxon>Lactobacillales</taxon>
        <taxon>Streptococcaceae</taxon>
        <taxon>Streptococcus</taxon>
    </lineage>
</organism>
<reference key="1">
    <citation type="journal article" date="2006" name="Proc. Natl. Acad. Sci. U.S.A.">
        <title>Molecular genetic anatomy of inter- and intraserotype variation in the human bacterial pathogen group A Streptococcus.</title>
        <authorList>
            <person name="Beres S.B."/>
            <person name="Richter E.W."/>
            <person name="Nagiec M.J."/>
            <person name="Sumby P."/>
            <person name="Porcella S.F."/>
            <person name="DeLeo F.R."/>
            <person name="Musser J.M."/>
        </authorList>
    </citation>
    <scope>NUCLEOTIDE SEQUENCE [LARGE SCALE GENOMIC DNA]</scope>
    <source>
        <strain>MGAS2096</strain>
    </source>
</reference>
<gene>
    <name evidence="1" type="primary">xpt</name>
    <name type="ordered locus">MGAS2096_Spy0932</name>
</gene>
<feature type="chain" id="PRO_0000339767" description="Xanthine phosphoribosyltransferase">
    <location>
        <begin position="1"/>
        <end position="193"/>
    </location>
</feature>
<feature type="binding site" evidence="1">
    <location>
        <position position="20"/>
    </location>
    <ligand>
        <name>xanthine</name>
        <dbReference type="ChEBI" id="CHEBI:17712"/>
    </ligand>
</feature>
<feature type="binding site" evidence="1">
    <location>
        <position position="27"/>
    </location>
    <ligand>
        <name>xanthine</name>
        <dbReference type="ChEBI" id="CHEBI:17712"/>
    </ligand>
</feature>
<feature type="binding site" evidence="1">
    <location>
        <begin position="128"/>
        <end position="132"/>
    </location>
    <ligand>
        <name>5-phospho-alpha-D-ribose 1-diphosphate</name>
        <dbReference type="ChEBI" id="CHEBI:58017"/>
    </ligand>
</feature>
<feature type="binding site" evidence="1">
    <location>
        <position position="156"/>
    </location>
    <ligand>
        <name>xanthine</name>
        <dbReference type="ChEBI" id="CHEBI:17712"/>
    </ligand>
</feature>
<evidence type="ECO:0000255" key="1">
    <source>
        <dbReference type="HAMAP-Rule" id="MF_01184"/>
    </source>
</evidence>
<keyword id="KW-0963">Cytoplasm</keyword>
<keyword id="KW-0328">Glycosyltransferase</keyword>
<keyword id="KW-0660">Purine salvage</keyword>
<keyword id="KW-0808">Transferase</keyword>
<sequence>MQLLEERILTDGNILGENILKVDNFLTHQVDYRLMKAIGKVFAQKYAEAGITKVVTIEASGIAPAVYAAEAMDVPMIFAKKHKNITMTEGILTAEVYSFTKQVTSTVSIAGKFLSKEDKVLIIDDFLANGQAAKGLIEIIGQAGAQVVGVGIVIEKSFQDGRRLIEDMGIEVTSLARIKNFENGNLNFLEADA</sequence>
<protein>
    <recommendedName>
        <fullName evidence="1">Xanthine phosphoribosyltransferase</fullName>
        <shortName evidence="1">XPRTase</shortName>
        <ecNumber evidence="1">2.4.2.22</ecNumber>
    </recommendedName>
</protein>
<name>XPT_STRPB</name>